<keyword id="KW-1185">Reference proteome</keyword>
<keyword id="KW-0687">Ribonucleoprotein</keyword>
<keyword id="KW-0689">Ribosomal protein</keyword>
<keyword id="KW-0694">RNA-binding</keyword>
<keyword id="KW-0699">rRNA-binding</keyword>
<name>RL6_BEII9</name>
<feature type="chain" id="PRO_1000143943" description="Large ribosomal subunit protein uL6">
    <location>
        <begin position="1"/>
        <end position="177"/>
    </location>
</feature>
<dbReference type="EMBL" id="CP001016">
    <property type="protein sequence ID" value="ACB95009.1"/>
    <property type="molecule type" value="Genomic_DNA"/>
</dbReference>
<dbReference type="RefSeq" id="WP_012384366.1">
    <property type="nucleotide sequence ID" value="NC_010581.1"/>
</dbReference>
<dbReference type="SMR" id="B2IK77"/>
<dbReference type="STRING" id="395963.Bind_1369"/>
<dbReference type="KEGG" id="bid:Bind_1369"/>
<dbReference type="eggNOG" id="COG0097">
    <property type="taxonomic scope" value="Bacteria"/>
</dbReference>
<dbReference type="HOGENOM" id="CLU_065464_1_2_5"/>
<dbReference type="OrthoDB" id="9805007at2"/>
<dbReference type="Proteomes" id="UP000001695">
    <property type="component" value="Chromosome"/>
</dbReference>
<dbReference type="GO" id="GO:0022625">
    <property type="term" value="C:cytosolic large ribosomal subunit"/>
    <property type="evidence" value="ECO:0007669"/>
    <property type="project" value="TreeGrafter"/>
</dbReference>
<dbReference type="GO" id="GO:0019843">
    <property type="term" value="F:rRNA binding"/>
    <property type="evidence" value="ECO:0007669"/>
    <property type="project" value="UniProtKB-UniRule"/>
</dbReference>
<dbReference type="GO" id="GO:0003735">
    <property type="term" value="F:structural constituent of ribosome"/>
    <property type="evidence" value="ECO:0007669"/>
    <property type="project" value="InterPro"/>
</dbReference>
<dbReference type="GO" id="GO:0002181">
    <property type="term" value="P:cytoplasmic translation"/>
    <property type="evidence" value="ECO:0007669"/>
    <property type="project" value="TreeGrafter"/>
</dbReference>
<dbReference type="FunFam" id="3.90.930.12:FF:000001">
    <property type="entry name" value="50S ribosomal protein L6"/>
    <property type="match status" value="1"/>
</dbReference>
<dbReference type="FunFam" id="3.90.930.12:FF:000002">
    <property type="entry name" value="50S ribosomal protein L6"/>
    <property type="match status" value="1"/>
</dbReference>
<dbReference type="Gene3D" id="3.90.930.12">
    <property type="entry name" value="Ribosomal protein L6, alpha-beta domain"/>
    <property type="match status" value="2"/>
</dbReference>
<dbReference type="HAMAP" id="MF_01365_B">
    <property type="entry name" value="Ribosomal_uL6_B"/>
    <property type="match status" value="1"/>
</dbReference>
<dbReference type="InterPro" id="IPR000702">
    <property type="entry name" value="Ribosomal_uL6-like"/>
</dbReference>
<dbReference type="InterPro" id="IPR036789">
    <property type="entry name" value="Ribosomal_uL6-like_a/b-dom_sf"/>
</dbReference>
<dbReference type="InterPro" id="IPR020040">
    <property type="entry name" value="Ribosomal_uL6_a/b-dom"/>
</dbReference>
<dbReference type="InterPro" id="IPR019906">
    <property type="entry name" value="Ribosomal_uL6_bac-type"/>
</dbReference>
<dbReference type="InterPro" id="IPR002358">
    <property type="entry name" value="Ribosomal_uL6_CS"/>
</dbReference>
<dbReference type="NCBIfam" id="TIGR03654">
    <property type="entry name" value="L6_bact"/>
    <property type="match status" value="1"/>
</dbReference>
<dbReference type="PANTHER" id="PTHR11655">
    <property type="entry name" value="60S/50S RIBOSOMAL PROTEIN L6/L9"/>
    <property type="match status" value="1"/>
</dbReference>
<dbReference type="PANTHER" id="PTHR11655:SF14">
    <property type="entry name" value="LARGE RIBOSOMAL SUBUNIT PROTEIN UL6M"/>
    <property type="match status" value="1"/>
</dbReference>
<dbReference type="Pfam" id="PF00347">
    <property type="entry name" value="Ribosomal_L6"/>
    <property type="match status" value="2"/>
</dbReference>
<dbReference type="PIRSF" id="PIRSF002162">
    <property type="entry name" value="Ribosomal_L6"/>
    <property type="match status" value="1"/>
</dbReference>
<dbReference type="PRINTS" id="PR00059">
    <property type="entry name" value="RIBOSOMALL6"/>
</dbReference>
<dbReference type="SUPFAM" id="SSF56053">
    <property type="entry name" value="Ribosomal protein L6"/>
    <property type="match status" value="2"/>
</dbReference>
<dbReference type="PROSITE" id="PS00525">
    <property type="entry name" value="RIBOSOMAL_L6_1"/>
    <property type="match status" value="1"/>
</dbReference>
<accession>B2IK77</accession>
<gene>
    <name evidence="1" type="primary">rplF</name>
    <name type="ordered locus">Bind_1369</name>
</gene>
<evidence type="ECO:0000255" key="1">
    <source>
        <dbReference type="HAMAP-Rule" id="MF_01365"/>
    </source>
</evidence>
<evidence type="ECO:0000305" key="2"/>
<sequence length="177" mass="18882">MSRIGKKPVVIPAGVTAKVEGQAISVKGGKGELHFTAPDYVSVALEGTQIAVSPRSEDKKARAAWGMTRSIVNNLVIGVSQGFERKLEITGVGYKAAVQGKNLQLSLGYSHDISFPIPDGIAIAAPKPTEVSITGIDKQRVGQIAAEIRALRPPEPYKGKGVKYAGEFIFRKEGKKK</sequence>
<protein>
    <recommendedName>
        <fullName evidence="1">Large ribosomal subunit protein uL6</fullName>
    </recommendedName>
    <alternativeName>
        <fullName evidence="2">50S ribosomal protein L6</fullName>
    </alternativeName>
</protein>
<reference key="1">
    <citation type="journal article" date="2010" name="J. Bacteriol.">
        <title>Complete genome sequence of Beijerinckia indica subsp. indica.</title>
        <authorList>
            <person name="Tamas I."/>
            <person name="Dedysh S.N."/>
            <person name="Liesack W."/>
            <person name="Stott M.B."/>
            <person name="Alam M."/>
            <person name="Murrell J.C."/>
            <person name="Dunfield P.F."/>
        </authorList>
    </citation>
    <scope>NUCLEOTIDE SEQUENCE [LARGE SCALE GENOMIC DNA]</scope>
    <source>
        <strain>ATCC 9039 / DSM 1715 / NCIMB 8712</strain>
    </source>
</reference>
<organism>
    <name type="scientific">Beijerinckia indica subsp. indica (strain ATCC 9039 / DSM 1715 / NCIMB 8712)</name>
    <dbReference type="NCBI Taxonomy" id="395963"/>
    <lineage>
        <taxon>Bacteria</taxon>
        <taxon>Pseudomonadati</taxon>
        <taxon>Pseudomonadota</taxon>
        <taxon>Alphaproteobacteria</taxon>
        <taxon>Hyphomicrobiales</taxon>
        <taxon>Beijerinckiaceae</taxon>
        <taxon>Beijerinckia</taxon>
    </lineage>
</organism>
<comment type="function">
    <text evidence="1">This protein binds to the 23S rRNA, and is important in its secondary structure. It is located near the subunit interface in the base of the L7/L12 stalk, and near the tRNA binding site of the peptidyltransferase center.</text>
</comment>
<comment type="subunit">
    <text evidence="1">Part of the 50S ribosomal subunit.</text>
</comment>
<comment type="similarity">
    <text evidence="1">Belongs to the universal ribosomal protein uL6 family.</text>
</comment>
<proteinExistence type="inferred from homology"/>